<name>COFC_METST</name>
<comment type="function">
    <text evidence="1">Guanylyltransferase that catalyzes the activation of (2S)-2-phospholactate (2-PL) as (2S)-lactyl-2-diphospho-5'-guanosine, via the condensation of 2-PL with GTP. It is involved in the biosynthesis of coenzyme F420, a hydride carrier cofactor.</text>
</comment>
<comment type="catalytic activity">
    <reaction evidence="1">
        <text>(2S)-2-phospholactate + GTP + H(+) = (2S)-lactyl-2-diphospho-5'-guanosine + diphosphate</text>
        <dbReference type="Rhea" id="RHEA:63424"/>
        <dbReference type="ChEBI" id="CHEBI:15378"/>
        <dbReference type="ChEBI" id="CHEBI:33019"/>
        <dbReference type="ChEBI" id="CHEBI:37565"/>
        <dbReference type="ChEBI" id="CHEBI:59435"/>
        <dbReference type="ChEBI" id="CHEBI:59906"/>
        <dbReference type="EC" id="2.7.7.68"/>
    </reaction>
</comment>
<comment type="pathway">
    <text evidence="1">Cofactor biosynthesis; coenzyme F420 biosynthesis.</text>
</comment>
<comment type="subunit">
    <text evidence="1">Homodimer.</text>
</comment>
<comment type="similarity">
    <text evidence="1">Belongs to the CofC family.</text>
</comment>
<dbReference type="EC" id="2.7.7.68" evidence="1"/>
<dbReference type="EMBL" id="CP000102">
    <property type="protein sequence ID" value="ABC57394.1"/>
    <property type="molecule type" value="Genomic_DNA"/>
</dbReference>
<dbReference type="RefSeq" id="WP_011406593.1">
    <property type="nucleotide sequence ID" value="NC_007681.1"/>
</dbReference>
<dbReference type="SMR" id="Q2NFK9"/>
<dbReference type="STRING" id="339860.Msp_1006"/>
<dbReference type="GeneID" id="41325575"/>
<dbReference type="KEGG" id="mst:Msp_1006"/>
<dbReference type="eggNOG" id="arCOG04472">
    <property type="taxonomic scope" value="Archaea"/>
</dbReference>
<dbReference type="HOGENOM" id="CLU_076569_2_0_2"/>
<dbReference type="OrthoDB" id="11179at2157"/>
<dbReference type="UniPathway" id="UPA00071"/>
<dbReference type="Proteomes" id="UP000001931">
    <property type="component" value="Chromosome"/>
</dbReference>
<dbReference type="GO" id="GO:0005525">
    <property type="term" value="F:GTP binding"/>
    <property type="evidence" value="ECO:0007669"/>
    <property type="project" value="UniProtKB-KW"/>
</dbReference>
<dbReference type="GO" id="GO:0043814">
    <property type="term" value="F:phospholactate guanylyltransferase activity"/>
    <property type="evidence" value="ECO:0007669"/>
    <property type="project" value="UniProtKB-EC"/>
</dbReference>
<dbReference type="GO" id="GO:0052645">
    <property type="term" value="P:F420-0 metabolic process"/>
    <property type="evidence" value="ECO:0007669"/>
    <property type="project" value="UniProtKB-UniRule"/>
</dbReference>
<dbReference type="Gene3D" id="3.90.550.10">
    <property type="entry name" value="Spore Coat Polysaccharide Biosynthesis Protein SpsA, Chain A"/>
    <property type="match status" value="1"/>
</dbReference>
<dbReference type="HAMAP" id="MF_02114">
    <property type="entry name" value="CofC"/>
    <property type="match status" value="1"/>
</dbReference>
<dbReference type="InterPro" id="IPR002835">
    <property type="entry name" value="CofC"/>
</dbReference>
<dbReference type="InterPro" id="IPR029044">
    <property type="entry name" value="Nucleotide-diphossugar_trans"/>
</dbReference>
<dbReference type="NCBIfam" id="TIGR03552">
    <property type="entry name" value="F420_cofC"/>
    <property type="match status" value="1"/>
</dbReference>
<dbReference type="PANTHER" id="PTHR40392">
    <property type="entry name" value="2-PHOSPHO-L-LACTATE GUANYLYLTRANSFERASE"/>
    <property type="match status" value="1"/>
</dbReference>
<dbReference type="PANTHER" id="PTHR40392:SF1">
    <property type="entry name" value="2-PHOSPHO-L-LACTATE GUANYLYLTRANSFERASE"/>
    <property type="match status" value="1"/>
</dbReference>
<dbReference type="Pfam" id="PF01983">
    <property type="entry name" value="CofC"/>
    <property type="match status" value="1"/>
</dbReference>
<dbReference type="SUPFAM" id="SSF53448">
    <property type="entry name" value="Nucleotide-diphospho-sugar transferases"/>
    <property type="match status" value="1"/>
</dbReference>
<gene>
    <name evidence="1" type="primary">cofC</name>
    <name type="ordered locus">Msp_1006</name>
</gene>
<sequence length="228" mass="26498">MNKIITIIPISSFNNSKTRLSPFLSESERTNLLKVMLKDIVSNIQDHVSDIIVTSKDEYVLNYAKYLNLNVFKEKEHEHDFLNNAISDAISYISKNYDNYSVMILPADIPLFNSRNMKYILKNRDDFIISPSKGGGTNLLYINREYNYKPLFGAFSFFKHVQEAKNNNLDVNIYDSFYLSLDVNTPEDLGEILLHGRNTHTYNYLSNLNIGVESNHGKERLYVYRKNE</sequence>
<proteinExistence type="inferred from homology"/>
<organism>
    <name type="scientific">Methanosphaera stadtmanae (strain ATCC 43021 / DSM 3091 / JCM 11832 / MCB-3)</name>
    <dbReference type="NCBI Taxonomy" id="339860"/>
    <lineage>
        <taxon>Archaea</taxon>
        <taxon>Methanobacteriati</taxon>
        <taxon>Methanobacteriota</taxon>
        <taxon>Methanomada group</taxon>
        <taxon>Methanobacteria</taxon>
        <taxon>Methanobacteriales</taxon>
        <taxon>Methanobacteriaceae</taxon>
        <taxon>Methanosphaera</taxon>
    </lineage>
</organism>
<feature type="chain" id="PRO_0000398758" description="2-phospho-L-lactate guanylyltransferase">
    <location>
        <begin position="1"/>
        <end position="228"/>
    </location>
</feature>
<keyword id="KW-0342">GTP-binding</keyword>
<keyword id="KW-0547">Nucleotide-binding</keyword>
<keyword id="KW-0548">Nucleotidyltransferase</keyword>
<keyword id="KW-1185">Reference proteome</keyword>
<keyword id="KW-0808">Transferase</keyword>
<protein>
    <recommendedName>
        <fullName evidence="1">2-phospho-L-lactate guanylyltransferase</fullName>
        <shortName evidence="1">LP guanylyltransferase</shortName>
        <ecNumber evidence="1">2.7.7.68</ecNumber>
    </recommendedName>
</protein>
<reference key="1">
    <citation type="journal article" date="2006" name="J. Bacteriol.">
        <title>The genome sequence of Methanosphaera stadtmanae reveals why this human intestinal archaeon is restricted to methanol and H2 for methane formation and ATP synthesis.</title>
        <authorList>
            <person name="Fricke W.F."/>
            <person name="Seedorf H."/>
            <person name="Henne A."/>
            <person name="Kruer M."/>
            <person name="Liesegang H."/>
            <person name="Hedderich R."/>
            <person name="Gottschalk G."/>
            <person name="Thauer R.K."/>
        </authorList>
    </citation>
    <scope>NUCLEOTIDE SEQUENCE [LARGE SCALE GENOMIC DNA]</scope>
    <source>
        <strain>ATCC 43021 / DSM 3091 / JCM 11832 / MCB-3</strain>
    </source>
</reference>
<evidence type="ECO:0000255" key="1">
    <source>
        <dbReference type="HAMAP-Rule" id="MF_02114"/>
    </source>
</evidence>
<accession>Q2NFK9</accession>